<organism>
    <name type="scientific">Arabidopsis thaliana</name>
    <name type="common">Mouse-ear cress</name>
    <dbReference type="NCBI Taxonomy" id="3702"/>
    <lineage>
        <taxon>Eukaryota</taxon>
        <taxon>Viridiplantae</taxon>
        <taxon>Streptophyta</taxon>
        <taxon>Embryophyta</taxon>
        <taxon>Tracheophyta</taxon>
        <taxon>Spermatophyta</taxon>
        <taxon>Magnoliopsida</taxon>
        <taxon>eudicotyledons</taxon>
        <taxon>Gunneridae</taxon>
        <taxon>Pentapetalae</taxon>
        <taxon>rosids</taxon>
        <taxon>malvids</taxon>
        <taxon>Brassicales</taxon>
        <taxon>Brassicaceae</taxon>
        <taxon>Camelineae</taxon>
        <taxon>Arabidopsis</taxon>
    </lineage>
</organism>
<accession>Q84X43</accession>
<accession>Q9SLD8</accession>
<gene>
    <name type="primary">FBX8</name>
    <name type="ordered locus">At2g16810</name>
    <name type="ORF">T24I21.22</name>
</gene>
<reference key="1">
    <citation type="journal article" date="1999" name="Nature">
        <title>Sequence and analysis of chromosome 2 of the plant Arabidopsis thaliana.</title>
        <authorList>
            <person name="Lin X."/>
            <person name="Kaul S."/>
            <person name="Rounsley S.D."/>
            <person name="Shea T.P."/>
            <person name="Benito M.-I."/>
            <person name="Town C.D."/>
            <person name="Fujii C.Y."/>
            <person name="Mason T.M."/>
            <person name="Bowman C.L."/>
            <person name="Barnstead M.E."/>
            <person name="Feldblyum T.V."/>
            <person name="Buell C.R."/>
            <person name="Ketchum K.A."/>
            <person name="Lee J.J."/>
            <person name="Ronning C.M."/>
            <person name="Koo H.L."/>
            <person name="Moffat K.S."/>
            <person name="Cronin L.A."/>
            <person name="Shen M."/>
            <person name="Pai G."/>
            <person name="Van Aken S."/>
            <person name="Umayam L."/>
            <person name="Tallon L.J."/>
            <person name="Gill J.E."/>
            <person name="Adams M.D."/>
            <person name="Carrera A.J."/>
            <person name="Creasy T.H."/>
            <person name="Goodman H.M."/>
            <person name="Somerville C.R."/>
            <person name="Copenhaver G.P."/>
            <person name="Preuss D."/>
            <person name="Nierman W.C."/>
            <person name="White O."/>
            <person name="Eisen J.A."/>
            <person name="Salzberg S.L."/>
            <person name="Fraser C.M."/>
            <person name="Venter J.C."/>
        </authorList>
    </citation>
    <scope>NUCLEOTIDE SEQUENCE [LARGE SCALE GENOMIC DNA]</scope>
    <source>
        <strain>cv. Columbia</strain>
    </source>
</reference>
<reference key="2">
    <citation type="journal article" date="2017" name="Plant J.">
        <title>Araport11: a complete reannotation of the Arabidopsis thaliana reference genome.</title>
        <authorList>
            <person name="Cheng C.Y."/>
            <person name="Krishnakumar V."/>
            <person name="Chan A.P."/>
            <person name="Thibaud-Nissen F."/>
            <person name="Schobel S."/>
            <person name="Town C.D."/>
        </authorList>
    </citation>
    <scope>GENOME REANNOTATION</scope>
    <source>
        <strain>cv. Columbia</strain>
    </source>
</reference>
<reference key="3">
    <citation type="submission" date="2005-03" db="EMBL/GenBank/DDBJ databases">
        <authorList>
            <person name="Underwood B.A."/>
            <person name="Xiao Y.-L."/>
            <person name="Moskal W.A. Jr."/>
            <person name="Monaghan E.L."/>
            <person name="Wang W."/>
            <person name="Redman J.C."/>
            <person name="Wu H.C."/>
            <person name="Utterback T."/>
            <person name="Town C.D."/>
        </authorList>
    </citation>
    <scope>NUCLEOTIDE SEQUENCE [LARGE SCALE GENOMIC DNA]</scope>
    <source>
        <strain>cv. Columbia</strain>
    </source>
</reference>
<reference key="4">
    <citation type="journal article" date="2005" name="Plant Physiol.">
        <title>Analysis of the cDNAs of hypothetical genes on Arabidopsis chromosome 2 reveals numerous transcript variants.</title>
        <authorList>
            <person name="Xiao Y.-L."/>
            <person name="Smith S.R."/>
            <person name="Ishmael N."/>
            <person name="Redman J.C."/>
            <person name="Kumar N."/>
            <person name="Monaghan E.L."/>
            <person name="Ayele M."/>
            <person name="Haas B.J."/>
            <person name="Wu H.C."/>
            <person name="Town C.D."/>
        </authorList>
    </citation>
    <scope>NUCLEOTIDE SEQUENCE [LARGE SCALE MRNA]</scope>
    <source>
        <strain>cv. Columbia</strain>
    </source>
</reference>
<reference key="5">
    <citation type="journal article" date="2000" name="Trends Plant Sci.">
        <title>F-box proteins in Arabidopsis.</title>
        <authorList>
            <person name="Xiao W."/>
            <person name="Jang J.-C."/>
        </authorList>
    </citation>
    <scope>GENE FAMILY</scope>
    <scope>NOMENCLATURE</scope>
</reference>
<proteinExistence type="evidence at transcript level"/>
<name>FBX8_ARATH</name>
<evidence type="ECO:0000255" key="1">
    <source>
        <dbReference type="PROSITE-ProRule" id="PRU00080"/>
    </source>
</evidence>
<evidence type="ECO:0000305" key="2"/>
<feature type="chain" id="PRO_0000273541" description="F-box only protein 8">
    <location>
        <begin position="1"/>
        <end position="295"/>
    </location>
</feature>
<feature type="domain" description="F-box" evidence="1">
    <location>
        <begin position="35"/>
        <end position="80"/>
    </location>
</feature>
<dbReference type="EMBL" id="AC005825">
    <property type="protein sequence ID" value="AAD24614.2"/>
    <property type="status" value="ALT_SEQ"/>
    <property type="molecule type" value="Genomic_DNA"/>
</dbReference>
<dbReference type="EMBL" id="CP002685">
    <property type="protein sequence ID" value="AEC06541.1"/>
    <property type="molecule type" value="Genomic_DNA"/>
</dbReference>
<dbReference type="EMBL" id="AY954788">
    <property type="protein sequence ID" value="AAX55114.1"/>
    <property type="molecule type" value="Genomic_DNA"/>
</dbReference>
<dbReference type="EMBL" id="AY219058">
    <property type="protein sequence ID" value="AAO37148.1"/>
    <property type="molecule type" value="mRNA"/>
</dbReference>
<dbReference type="PIR" id="E84544">
    <property type="entry name" value="E84544"/>
</dbReference>
<dbReference type="RefSeq" id="NP_565395.2">
    <property type="nucleotide sequence ID" value="NM_127233.2"/>
</dbReference>
<dbReference type="FunCoup" id="Q84X43">
    <property type="interactions" value="2"/>
</dbReference>
<dbReference type="PaxDb" id="3702-AT2G16810.1"/>
<dbReference type="EnsemblPlants" id="AT2G16810.1">
    <property type="protein sequence ID" value="AT2G16810.1"/>
    <property type="gene ID" value="AT2G16810"/>
</dbReference>
<dbReference type="GeneID" id="816182"/>
<dbReference type="Gramene" id="AT2G16810.1">
    <property type="protein sequence ID" value="AT2G16810.1"/>
    <property type="gene ID" value="AT2G16810"/>
</dbReference>
<dbReference type="KEGG" id="ath:AT2G16810"/>
<dbReference type="Araport" id="AT2G16810"/>
<dbReference type="TAIR" id="AT2G16810"/>
<dbReference type="HOGENOM" id="CLU_027176_8_3_1"/>
<dbReference type="InParanoid" id="Q84X43"/>
<dbReference type="OMA" id="RVANEFP"/>
<dbReference type="PhylomeDB" id="Q84X43"/>
<dbReference type="PRO" id="PR:Q84X43"/>
<dbReference type="Proteomes" id="UP000006548">
    <property type="component" value="Chromosome 2"/>
</dbReference>
<dbReference type="ExpressionAtlas" id="Q84X43">
    <property type="expression patterns" value="baseline and differential"/>
</dbReference>
<dbReference type="CDD" id="cd22157">
    <property type="entry name" value="F-box_AtFBW1-like"/>
    <property type="match status" value="1"/>
</dbReference>
<dbReference type="Gene3D" id="1.20.1280.50">
    <property type="match status" value="1"/>
</dbReference>
<dbReference type="InterPro" id="IPR013187">
    <property type="entry name" value="F-box-assoc_dom_typ3"/>
</dbReference>
<dbReference type="InterPro" id="IPR017451">
    <property type="entry name" value="F-box-assoc_interact_dom"/>
</dbReference>
<dbReference type="InterPro" id="IPR036047">
    <property type="entry name" value="F-box-like_dom_sf"/>
</dbReference>
<dbReference type="InterPro" id="IPR001810">
    <property type="entry name" value="F-box_dom"/>
</dbReference>
<dbReference type="NCBIfam" id="TIGR01640">
    <property type="entry name" value="F_box_assoc_1"/>
    <property type="match status" value="1"/>
</dbReference>
<dbReference type="PANTHER" id="PTHR31111">
    <property type="entry name" value="BNAA05G37150D PROTEIN-RELATED"/>
    <property type="match status" value="1"/>
</dbReference>
<dbReference type="PANTHER" id="PTHR31111:SF37">
    <property type="entry name" value="F-BOX ONLY PROTEIN 8"/>
    <property type="match status" value="1"/>
</dbReference>
<dbReference type="Pfam" id="PF00646">
    <property type="entry name" value="F-box"/>
    <property type="match status" value="1"/>
</dbReference>
<dbReference type="Pfam" id="PF08268">
    <property type="entry name" value="FBA_3"/>
    <property type="match status" value="1"/>
</dbReference>
<dbReference type="SMART" id="SM00256">
    <property type="entry name" value="FBOX"/>
    <property type="match status" value="1"/>
</dbReference>
<dbReference type="SUPFAM" id="SSF81383">
    <property type="entry name" value="F-box domain"/>
    <property type="match status" value="1"/>
</dbReference>
<dbReference type="PROSITE" id="PS50181">
    <property type="entry name" value="FBOX"/>
    <property type="match status" value="1"/>
</dbReference>
<protein>
    <recommendedName>
        <fullName>F-box only protein 8</fullName>
    </recommendedName>
</protein>
<sequence length="295" mass="34529">MGFSFLLATVQKERMKRRSRTRSRSRRRAKQDPKTWVARYIPQDLLIEILTRLPPKSVMRFKCVSKFWSSLLSSRYFCNRFLIVPSQPQPSLYMCLLDRYNYSKSLILSSAPSTSPYSFVFDQDLTIRKMGGFFLRILRGFIFFTRNLKARIYNPTTRQLVILPTIKESDIIAGPPYNILYFICHDPVNDRYKLLCTVSYASDNDLQNLKSELWIFVLEAGGSWKRVANEFPHHVPSHLDLNMNGVLYFLAWTDPHTCMLVSFDVRSEEFNTMQVPRNAGDTLPRQEKGVVNRVW</sequence>
<keyword id="KW-1185">Reference proteome</keyword>
<comment type="sequence caution" evidence="2">
    <conflict type="erroneous gene model prediction">
        <sequence resource="EMBL-CDS" id="AAD24614"/>
    </conflict>
</comment>